<feature type="transit peptide" description="Chloroplast" evidence="5">
    <location>
        <begin position="1"/>
        <end position="41"/>
    </location>
</feature>
<feature type="chain" id="PRO_0000002680" description="ATP synthase gamma chain, chloroplastic">
    <location>
        <begin position="42"/>
        <end position="364"/>
    </location>
</feature>
<feature type="region of interest" description="Disordered" evidence="2">
    <location>
        <begin position="17"/>
        <end position="36"/>
    </location>
</feature>
<feature type="compositionally biased region" description="Low complexity" evidence="2">
    <location>
        <begin position="25"/>
        <end position="36"/>
    </location>
</feature>
<feature type="active site" evidence="4">
    <location>
        <position position="130"/>
    </location>
</feature>
<feature type="disulfide bond" description="In inhibited form" evidence="3 4">
    <location>
        <begin position="240"/>
        <end position="246"/>
    </location>
</feature>
<feature type="helix" evidence="7">
    <location>
        <begin position="44"/>
        <end position="100"/>
    </location>
</feature>
<feature type="strand" evidence="7">
    <location>
        <begin position="116"/>
        <end position="123"/>
    </location>
</feature>
<feature type="strand" evidence="7">
    <location>
        <begin position="126"/>
        <end position="128"/>
    </location>
</feature>
<feature type="helix" evidence="7">
    <location>
        <begin position="133"/>
        <end position="150"/>
    </location>
</feature>
<feature type="strand" evidence="7">
    <location>
        <begin position="155"/>
        <end position="161"/>
    </location>
</feature>
<feature type="helix" evidence="7">
    <location>
        <begin position="162"/>
        <end position="170"/>
    </location>
</feature>
<feature type="strand" evidence="7">
    <location>
        <begin position="176"/>
        <end position="180"/>
    </location>
</feature>
<feature type="helix" evidence="7">
    <location>
        <begin position="188"/>
        <end position="203"/>
    </location>
</feature>
<feature type="strand" evidence="7">
    <location>
        <begin position="211"/>
        <end position="215"/>
    </location>
</feature>
<feature type="strand" evidence="7">
    <location>
        <begin position="225"/>
        <end position="229"/>
    </location>
</feature>
<feature type="strand" evidence="7">
    <location>
        <begin position="239"/>
        <end position="244"/>
    </location>
</feature>
<feature type="strand" evidence="7">
    <location>
        <begin position="251"/>
        <end position="259"/>
    </location>
</feature>
<feature type="strand" evidence="7">
    <location>
        <begin position="261"/>
        <end position="272"/>
    </location>
</feature>
<feature type="strand" evidence="7">
    <location>
        <begin position="283"/>
        <end position="286"/>
    </location>
</feature>
<feature type="helix" evidence="7">
    <location>
        <begin position="288"/>
        <end position="362"/>
    </location>
</feature>
<gene>
    <name type="primary">ATPC</name>
</gene>
<keyword id="KW-0002">3D-structure</keyword>
<keyword id="KW-0066">ATP synthesis</keyword>
<keyword id="KW-0139">CF(1)</keyword>
<keyword id="KW-0150">Chloroplast</keyword>
<keyword id="KW-0903">Direct protein sequencing</keyword>
<keyword id="KW-1015">Disulfide bond</keyword>
<keyword id="KW-0375">Hydrogen ion transport</keyword>
<keyword id="KW-0406">Ion transport</keyword>
<keyword id="KW-0472">Membrane</keyword>
<keyword id="KW-0934">Plastid</keyword>
<keyword id="KW-1185">Reference proteome</keyword>
<keyword id="KW-0793">Thylakoid</keyword>
<keyword id="KW-0809">Transit peptide</keyword>
<keyword id="KW-0813">Transport</keyword>
<sequence length="364" mass="40074">MACSLSFSSSVSTFHLPTTTQSTQAPPNNATTLPTTNPIQCANLRELRDRIGSVKNTQKITEAMKLVAAAKVRRAQEAVVNGRPFSETLVEVLYNMNEQLQTEDVDVPLTKIRTVKKVALMVVTGDRGLCGGFNNMLLKKAESRIAELKKLGVDYTIISIGKKGNTYFIRRPEIPVDRYFDGTNLPTAKEAQAIADDVFSLFVSEEVDKVEMLYTKFVSLVKSDPVIHTLLPLSPKGEICDINGKCVDAAEDELFRLTTKEGKLTVERDMIKTETPAFSPILEFEQDPAQILDALLPLYLNSQILRALQESLASELAARMTAMSNATDNANELKKTLSINYNRARQAKITGEILEIVAGANACV</sequence>
<evidence type="ECO:0000250" key="1"/>
<evidence type="ECO:0000256" key="2">
    <source>
        <dbReference type="SAM" id="MobiDB-lite"/>
    </source>
</evidence>
<evidence type="ECO:0000269" key="3">
    <source>
    </source>
</evidence>
<evidence type="ECO:0000269" key="4">
    <source>
    </source>
</evidence>
<evidence type="ECO:0000269" key="5">
    <source>
    </source>
</evidence>
<evidence type="ECO:0000305" key="6"/>
<evidence type="ECO:0007829" key="7">
    <source>
        <dbReference type="PDB" id="6FKF"/>
    </source>
</evidence>
<protein>
    <recommendedName>
        <fullName>ATP synthase gamma chain, chloroplastic</fullName>
    </recommendedName>
    <alternativeName>
        <fullName>F-ATPase gamma subunit</fullName>
    </alternativeName>
</protein>
<organism>
    <name type="scientific">Spinacia oleracea</name>
    <name type="common">Spinach</name>
    <dbReference type="NCBI Taxonomy" id="3562"/>
    <lineage>
        <taxon>Eukaryota</taxon>
        <taxon>Viridiplantae</taxon>
        <taxon>Streptophyta</taxon>
        <taxon>Embryophyta</taxon>
        <taxon>Tracheophyta</taxon>
        <taxon>Spermatophyta</taxon>
        <taxon>Magnoliopsida</taxon>
        <taxon>eudicotyledons</taxon>
        <taxon>Gunneridae</taxon>
        <taxon>Pentapetalae</taxon>
        <taxon>Caryophyllales</taxon>
        <taxon>Chenopodiaceae</taxon>
        <taxon>Chenopodioideae</taxon>
        <taxon>Anserineae</taxon>
        <taxon>Spinacia</taxon>
    </lineage>
</organism>
<dbReference type="EMBL" id="Y00758">
    <property type="protein sequence ID" value="CAA68727.1"/>
    <property type="molecule type" value="mRNA"/>
</dbReference>
<dbReference type="EMBL" id="X76131">
    <property type="protein sequence ID" value="CAA53734.1"/>
    <property type="molecule type" value="Genomic_DNA"/>
</dbReference>
<dbReference type="EMBL" id="X17257">
    <property type="protein sequence ID" value="CAA35158.1"/>
    <property type="molecule type" value="Genomic_DNA"/>
</dbReference>
<dbReference type="PIR" id="S10163">
    <property type="entry name" value="PWSPG"/>
</dbReference>
<dbReference type="PDB" id="6FKF">
    <property type="method" value="EM"/>
    <property type="resolution" value="3.10 A"/>
    <property type="chains" value="g=1-364"/>
</dbReference>
<dbReference type="PDB" id="6FKH">
    <property type="method" value="EM"/>
    <property type="resolution" value="4.20 A"/>
    <property type="chains" value="g=1-364"/>
</dbReference>
<dbReference type="PDB" id="6FKI">
    <property type="method" value="EM"/>
    <property type="resolution" value="4.30 A"/>
    <property type="chains" value="g=1-364"/>
</dbReference>
<dbReference type="PDB" id="6VM1">
    <property type="method" value="EM"/>
    <property type="resolution" value="7.90 A"/>
    <property type="chains" value="g=1-364"/>
</dbReference>
<dbReference type="PDB" id="6VM4">
    <property type="method" value="EM"/>
    <property type="resolution" value="7.08 A"/>
    <property type="chains" value="g=1-364"/>
</dbReference>
<dbReference type="PDB" id="6VMB">
    <property type="method" value="EM"/>
    <property type="resolution" value="5.23 A"/>
    <property type="chains" value="g=1-364"/>
</dbReference>
<dbReference type="PDB" id="6VMD">
    <property type="method" value="EM"/>
    <property type="resolution" value="4.53 A"/>
    <property type="chains" value="g=1-364"/>
</dbReference>
<dbReference type="PDB" id="6VMG">
    <property type="method" value="EM"/>
    <property type="resolution" value="6.46 A"/>
    <property type="chains" value="g=1-364"/>
</dbReference>
<dbReference type="PDB" id="6VOF">
    <property type="method" value="EM"/>
    <property type="resolution" value="4.51 A"/>
    <property type="chains" value="g=1-364"/>
</dbReference>
<dbReference type="PDB" id="6VOG">
    <property type="method" value="EM"/>
    <property type="resolution" value="4.35 A"/>
    <property type="chains" value="g=1-364"/>
</dbReference>
<dbReference type="PDB" id="6VOH">
    <property type="method" value="EM"/>
    <property type="resolution" value="4.16 A"/>
    <property type="chains" value="g=1-364"/>
</dbReference>
<dbReference type="PDB" id="6VOI">
    <property type="method" value="EM"/>
    <property type="resolution" value="4.03 A"/>
    <property type="chains" value="g=1-364"/>
</dbReference>
<dbReference type="PDB" id="6VOJ">
    <property type="method" value="EM"/>
    <property type="resolution" value="4.34 A"/>
    <property type="chains" value="g=1-364"/>
</dbReference>
<dbReference type="PDB" id="6VOK">
    <property type="method" value="EM"/>
    <property type="resolution" value="3.85 A"/>
    <property type="chains" value="g=1-364"/>
</dbReference>
<dbReference type="PDB" id="6VOL">
    <property type="method" value="EM"/>
    <property type="resolution" value="4.06 A"/>
    <property type="chains" value="g=1-364"/>
</dbReference>
<dbReference type="PDB" id="6VOM">
    <property type="method" value="EM"/>
    <property type="resolution" value="3.60 A"/>
    <property type="chains" value="g=1-364"/>
</dbReference>
<dbReference type="PDB" id="6VON">
    <property type="method" value="EM"/>
    <property type="resolution" value="3.35 A"/>
    <property type="chains" value="g=1-364"/>
</dbReference>
<dbReference type="PDB" id="6VOO">
    <property type="method" value="EM"/>
    <property type="resolution" value="3.05 A"/>
    <property type="chains" value="g=1-364"/>
</dbReference>
<dbReference type="PDBsum" id="6FKF"/>
<dbReference type="PDBsum" id="6FKH"/>
<dbReference type="PDBsum" id="6FKI"/>
<dbReference type="PDBsum" id="6VM1"/>
<dbReference type="PDBsum" id="6VM4"/>
<dbReference type="PDBsum" id="6VMB"/>
<dbReference type="PDBsum" id="6VMD"/>
<dbReference type="PDBsum" id="6VMG"/>
<dbReference type="PDBsum" id="6VOF"/>
<dbReference type="PDBsum" id="6VOG"/>
<dbReference type="PDBsum" id="6VOH"/>
<dbReference type="PDBsum" id="6VOI"/>
<dbReference type="PDBsum" id="6VOJ"/>
<dbReference type="PDBsum" id="6VOK"/>
<dbReference type="PDBsum" id="6VOL"/>
<dbReference type="PDBsum" id="6VOM"/>
<dbReference type="PDBsum" id="6VON"/>
<dbReference type="PDBsum" id="6VOO"/>
<dbReference type="EMDB" id="EMD-21235"/>
<dbReference type="EMDB" id="EMD-21238"/>
<dbReference type="EMDB" id="EMD-21239"/>
<dbReference type="EMDB" id="EMD-21240"/>
<dbReference type="EMDB" id="EMD-21241"/>
<dbReference type="EMDB" id="EMD-21262"/>
<dbReference type="EMDB" id="EMD-21263"/>
<dbReference type="EMDB" id="EMD-21264"/>
<dbReference type="EMDB" id="EMD-21265"/>
<dbReference type="EMDB" id="EMD-21266"/>
<dbReference type="EMDB" id="EMD-21267"/>
<dbReference type="EMDB" id="EMD-21268"/>
<dbReference type="EMDB" id="EMD-21269"/>
<dbReference type="EMDB" id="EMD-21270"/>
<dbReference type="EMDB" id="EMD-21271"/>
<dbReference type="EMDB" id="EMD-4270"/>
<dbReference type="EMDB" id="EMD-4271"/>
<dbReference type="EMDB" id="EMD-4272"/>
<dbReference type="SASBDB" id="P05435"/>
<dbReference type="SMR" id="P05435"/>
<dbReference type="IntAct" id="P05435">
    <property type="interactions" value="1"/>
</dbReference>
<dbReference type="ChEMBL" id="CHEMBL2366567"/>
<dbReference type="OrthoDB" id="239812at2759"/>
<dbReference type="Proteomes" id="UP001155700">
    <property type="component" value="Unplaced"/>
</dbReference>
<dbReference type="GO" id="GO:0009535">
    <property type="term" value="C:chloroplast thylakoid membrane"/>
    <property type="evidence" value="ECO:0007669"/>
    <property type="project" value="UniProtKB-SubCell"/>
</dbReference>
<dbReference type="GO" id="GO:0045259">
    <property type="term" value="C:proton-transporting ATP synthase complex"/>
    <property type="evidence" value="ECO:0007669"/>
    <property type="project" value="UniProtKB-KW"/>
</dbReference>
<dbReference type="GO" id="GO:0046933">
    <property type="term" value="F:proton-transporting ATP synthase activity, rotational mechanism"/>
    <property type="evidence" value="ECO:0007669"/>
    <property type="project" value="InterPro"/>
</dbReference>
<dbReference type="CDD" id="cd12151">
    <property type="entry name" value="F1-ATPase_gamma"/>
    <property type="match status" value="1"/>
</dbReference>
<dbReference type="FunFam" id="1.10.287.80:FF:000003">
    <property type="entry name" value="ATP synthase gamma chain, chloroplastic"/>
    <property type="match status" value="1"/>
</dbReference>
<dbReference type="FunFam" id="1.10.287.80:FF:000004">
    <property type="entry name" value="ATP synthase gamma chain, chloroplastic"/>
    <property type="match status" value="1"/>
</dbReference>
<dbReference type="FunFam" id="3.40.1380.10:FF:000004">
    <property type="entry name" value="ATP synthase gamma chain, chloroplastic"/>
    <property type="match status" value="1"/>
</dbReference>
<dbReference type="Gene3D" id="3.40.1380.10">
    <property type="match status" value="1"/>
</dbReference>
<dbReference type="Gene3D" id="1.10.287.80">
    <property type="entry name" value="ATP synthase, gamma subunit, helix hairpin domain"/>
    <property type="match status" value="2"/>
</dbReference>
<dbReference type="HAMAP" id="MF_00815">
    <property type="entry name" value="ATP_synth_gamma_bact"/>
    <property type="match status" value="1"/>
</dbReference>
<dbReference type="InterPro" id="IPR035968">
    <property type="entry name" value="ATP_synth_F1_ATPase_gsu"/>
</dbReference>
<dbReference type="InterPro" id="IPR000131">
    <property type="entry name" value="ATP_synth_F1_gsu"/>
</dbReference>
<dbReference type="InterPro" id="IPR023632">
    <property type="entry name" value="ATP_synth_F1_gsu_CS"/>
</dbReference>
<dbReference type="NCBIfam" id="TIGR01146">
    <property type="entry name" value="ATPsyn_F1gamma"/>
    <property type="match status" value="1"/>
</dbReference>
<dbReference type="NCBIfam" id="NF004145">
    <property type="entry name" value="PRK05621.1-2"/>
    <property type="match status" value="1"/>
</dbReference>
<dbReference type="PANTHER" id="PTHR11693">
    <property type="entry name" value="ATP SYNTHASE GAMMA CHAIN"/>
    <property type="match status" value="1"/>
</dbReference>
<dbReference type="PANTHER" id="PTHR11693:SF41">
    <property type="entry name" value="ATP SYNTHASE GAMMA CHAIN, CHLOROPLASTIC"/>
    <property type="match status" value="1"/>
</dbReference>
<dbReference type="Pfam" id="PF00231">
    <property type="entry name" value="ATP-synt"/>
    <property type="match status" value="1"/>
</dbReference>
<dbReference type="PRINTS" id="PR00126">
    <property type="entry name" value="ATPASEGAMMA"/>
</dbReference>
<dbReference type="SUPFAM" id="SSF52943">
    <property type="entry name" value="ATP synthase (F1-ATPase), gamma subunit"/>
    <property type="match status" value="1"/>
</dbReference>
<dbReference type="PROSITE" id="PS00153">
    <property type="entry name" value="ATPASE_GAMMA"/>
    <property type="match status" value="1"/>
</dbReference>
<proteinExistence type="evidence at protein level"/>
<name>ATPG_SPIOL</name>
<comment type="function">
    <text>Produces ATP from ADP in the presence of a proton gradient across the membrane. The gamma chain is believed to be important in regulating ATPase activity and the flow of protons through the CF(0) complex.</text>
</comment>
<comment type="subunit">
    <text evidence="1">F-type ATPases have 2 components, CF(1) - the catalytic core - and CF(0) - the membrane proton channel. CF(1) has five subunits: alpha(3), beta(3), gamma(1), delta(1), epsilon(1). CF(0) has four main subunits: a, b, b' and c (By similarity).</text>
</comment>
<comment type="subcellular location">
    <subcellularLocation>
        <location>Plastid</location>
        <location>Chloroplast thylakoid membrane</location>
        <topology>Peripheral membrane protein</topology>
    </subcellularLocation>
</comment>
<comment type="PTM">
    <text>Disulfide bond; Cys-240 and Cys-246 are known to form a disulfide bridge in the dark which gives rise to an inactive enzyme. Activation can be brought about by a ferredoxin-dependent reduction of the disulfide bond in the light.</text>
</comment>
<comment type="miscellaneous">
    <text>Alkylation of Cys-130 results in the inactivation of ATP synthesis.</text>
</comment>
<comment type="similarity">
    <text evidence="6">Belongs to the ATPase gamma chain family.</text>
</comment>
<accession>P05435</accession>
<reference key="1">
    <citation type="journal article" date="1990" name="Plant Mol. Biol.">
        <title>The gamma-subunit of spinach chloroplast ATP synthase: isolation and characterisation of cDNA and genomic clones.</title>
        <authorList>
            <person name="Mason J.G."/>
            <person name="Whitfeld P.R."/>
        </authorList>
    </citation>
    <scope>NUCLEOTIDE SEQUENCE [GENOMIC DNA]</scope>
    <source>
        <tissue>Leaf</tissue>
    </source>
</reference>
<reference key="2">
    <citation type="submission" date="1993-11" db="EMBL/GenBank/DDBJ databases">
        <authorList>
            <person name="Oelmueller R."/>
        </authorList>
    </citation>
    <scope>NUCLEOTIDE SEQUENCE</scope>
    <source>
        <strain>cv. Monatol</strain>
        <tissue>Seedling</tissue>
    </source>
</reference>
<reference key="3">
    <citation type="journal article" date="1988" name="FEBS Lett.">
        <title>The gamma-subunit of ATP synthase from spinach chloroplasts. Primary structure deduced from the cloned cDNA sequence.</title>
        <authorList>
            <person name="Miki J."/>
            <person name="Maeda M."/>
            <person name="Mukohata Y."/>
            <person name="Futai M."/>
        </authorList>
    </citation>
    <scope>NUCLEOTIDE SEQUENCE [MRNA] OF 36-364</scope>
    <scope>PARTIAL PROTEIN SEQUENCE</scope>
    <source>
        <strain>cv. Nobel</strain>
    </source>
</reference>
<reference key="4">
    <citation type="journal article" date="1996" name="Biochemistry">
        <title>Proteolytic cleavage within a regulatory region of the gamma subunit of chloroplast coupling factor 1.</title>
        <authorList>
            <person name="Hightower K.E."/>
            <person name="McCarty R.E."/>
        </authorList>
    </citation>
    <scope>PROTEIN SEQUENCE OF 42-51; 112-128 AND 273-282</scope>
</reference>
<reference key="5">
    <citation type="journal article" date="1984" name="J. Biol. Chem.">
        <title>Characterization of the cysteinyl-containing peptides of the gamma subunit of coupling factor 1.</title>
        <authorList>
            <person name="Moroney J.V."/>
            <person name="Fullmer C.S."/>
            <person name="McCarty R.E."/>
        </authorList>
    </citation>
    <scope>DISULFIDE BOND</scope>
    <scope>ACTIVE SITE</scope>
</reference>